<accession>Q9V1C7</accession>
<accession>G8ZGL0</accession>
<feature type="chain" id="PRO_0000156398" description="UPF0173 metal-dependent hydrolase PYRAB05000">
    <location>
        <begin position="1"/>
        <end position="225"/>
    </location>
</feature>
<reference key="1">
    <citation type="journal article" date="2003" name="Mol. Microbiol.">
        <title>An integrated analysis of the genome of the hyperthermophilic archaeon Pyrococcus abyssi.</title>
        <authorList>
            <person name="Cohen G.N."/>
            <person name="Barbe V."/>
            <person name="Flament D."/>
            <person name="Galperin M."/>
            <person name="Heilig R."/>
            <person name="Lecompte O."/>
            <person name="Poch O."/>
            <person name="Prieur D."/>
            <person name="Querellou J."/>
            <person name="Ripp R."/>
            <person name="Thierry J.-C."/>
            <person name="Van der Oost J."/>
            <person name="Weissenbach J."/>
            <person name="Zivanovic Y."/>
            <person name="Forterre P."/>
        </authorList>
    </citation>
    <scope>NUCLEOTIDE SEQUENCE [LARGE SCALE GENOMIC DNA]</scope>
    <source>
        <strain>GE5 / Orsay</strain>
    </source>
</reference>
<reference key="2">
    <citation type="journal article" date="2012" name="Curr. Microbiol.">
        <title>Re-annotation of two hyperthermophilic archaea Pyrococcus abyssi GE5 and Pyrococcus furiosus DSM 3638.</title>
        <authorList>
            <person name="Gao J."/>
            <person name="Wang J."/>
        </authorList>
    </citation>
    <scope>GENOME REANNOTATION</scope>
    <source>
        <strain>GE5 / Orsay</strain>
    </source>
</reference>
<protein>
    <recommendedName>
        <fullName evidence="1">UPF0173 metal-dependent hydrolase PYRAB05000</fullName>
    </recommendedName>
</protein>
<organism>
    <name type="scientific">Pyrococcus abyssi (strain GE5 / Orsay)</name>
    <dbReference type="NCBI Taxonomy" id="272844"/>
    <lineage>
        <taxon>Archaea</taxon>
        <taxon>Methanobacteriati</taxon>
        <taxon>Methanobacteriota</taxon>
        <taxon>Thermococci</taxon>
        <taxon>Thermococcales</taxon>
        <taxon>Thermococcaceae</taxon>
        <taxon>Pyrococcus</taxon>
    </lineage>
</organism>
<name>Y500_PYRAB</name>
<sequence length="225" mass="24475">MVKVKFLGHAAFYIEGSKKILIDPFLTGNPQAVAKPEDFKDVDLILVTHAHGDHIGDAGEIAKISGAKIVAMYDIANYIAEKFKGVETVGMNYGPTEVDGVFIVQVPAWHSSSDGKYSIGNASGFIVKLDGKTIYHAGDTYVFKDMELFSELYGPIDVALLPIGGHFTMGVKEAAKAVELLKPRTVVPMHYNTWPPISADPEEFKKLVGDKAKVVVLKPGEELEL</sequence>
<keyword id="KW-0378">Hydrolase</keyword>
<evidence type="ECO:0000255" key="1">
    <source>
        <dbReference type="HAMAP-Rule" id="MF_00457"/>
    </source>
</evidence>
<proteinExistence type="inferred from homology"/>
<dbReference type="EMBL" id="AJ248284">
    <property type="protein sequence ID" value="CAB49422.1"/>
    <property type="molecule type" value="Genomic_DNA"/>
</dbReference>
<dbReference type="EMBL" id="HE613800">
    <property type="protein sequence ID" value="CCE69889.1"/>
    <property type="molecule type" value="Genomic_DNA"/>
</dbReference>
<dbReference type="PIR" id="G75167">
    <property type="entry name" value="G75167"/>
</dbReference>
<dbReference type="RefSeq" id="WP_010867624.1">
    <property type="nucleotide sequence ID" value="NC_000868.1"/>
</dbReference>
<dbReference type="SMR" id="Q9V1C7"/>
<dbReference type="STRING" id="272844.PAB0339"/>
<dbReference type="KEGG" id="pab:PAB0339"/>
<dbReference type="PATRIC" id="fig|272844.11.peg.535"/>
<dbReference type="eggNOG" id="arCOG00497">
    <property type="taxonomic scope" value="Archaea"/>
</dbReference>
<dbReference type="HOGENOM" id="CLU_070010_4_0_2"/>
<dbReference type="OrthoDB" id="28313at2157"/>
<dbReference type="PhylomeDB" id="Q9V1C7"/>
<dbReference type="Proteomes" id="UP000000810">
    <property type="component" value="Chromosome"/>
</dbReference>
<dbReference type="Proteomes" id="UP000009139">
    <property type="component" value="Chromosome"/>
</dbReference>
<dbReference type="GO" id="GO:0016787">
    <property type="term" value="F:hydrolase activity"/>
    <property type="evidence" value="ECO:0007669"/>
    <property type="project" value="UniProtKB-UniRule"/>
</dbReference>
<dbReference type="Gene3D" id="3.60.15.10">
    <property type="entry name" value="Ribonuclease Z/Hydroxyacylglutathione hydrolase-like"/>
    <property type="match status" value="1"/>
</dbReference>
<dbReference type="HAMAP" id="MF_00457">
    <property type="entry name" value="UPF0173"/>
    <property type="match status" value="1"/>
</dbReference>
<dbReference type="InterPro" id="IPR001279">
    <property type="entry name" value="Metallo-B-lactamas"/>
</dbReference>
<dbReference type="InterPro" id="IPR036866">
    <property type="entry name" value="RibonucZ/Hydroxyglut_hydro"/>
</dbReference>
<dbReference type="InterPro" id="IPR022877">
    <property type="entry name" value="UPF0173"/>
</dbReference>
<dbReference type="InterPro" id="IPR050114">
    <property type="entry name" value="UPF0173_UPF0282_UlaG_hydrolase"/>
</dbReference>
<dbReference type="NCBIfam" id="NF001911">
    <property type="entry name" value="PRK00685.1"/>
    <property type="match status" value="1"/>
</dbReference>
<dbReference type="PANTHER" id="PTHR43546:SF3">
    <property type="entry name" value="UPF0173 METAL-DEPENDENT HYDROLASE MJ1163"/>
    <property type="match status" value="1"/>
</dbReference>
<dbReference type="PANTHER" id="PTHR43546">
    <property type="entry name" value="UPF0173 METAL-DEPENDENT HYDROLASE MJ1163-RELATED"/>
    <property type="match status" value="1"/>
</dbReference>
<dbReference type="Pfam" id="PF13483">
    <property type="entry name" value="Lactamase_B_3"/>
    <property type="match status" value="1"/>
</dbReference>
<dbReference type="SMART" id="SM00849">
    <property type="entry name" value="Lactamase_B"/>
    <property type="match status" value="1"/>
</dbReference>
<dbReference type="SUPFAM" id="SSF56281">
    <property type="entry name" value="Metallo-hydrolase/oxidoreductase"/>
    <property type="match status" value="1"/>
</dbReference>
<gene>
    <name type="ordered locus">PYRAB05000</name>
    <name type="ORF">PAB0339</name>
</gene>
<comment type="similarity">
    <text evidence="1">Belongs to the UPF0173 family.</text>
</comment>